<reference key="1">
    <citation type="submission" date="2009-01" db="EMBL/GenBank/DDBJ databases">
        <title>Complete sequence of chromosome of Methylobacterium nodulans ORS 2060.</title>
        <authorList>
            <consortium name="US DOE Joint Genome Institute"/>
            <person name="Lucas S."/>
            <person name="Copeland A."/>
            <person name="Lapidus A."/>
            <person name="Glavina del Rio T."/>
            <person name="Dalin E."/>
            <person name="Tice H."/>
            <person name="Bruce D."/>
            <person name="Goodwin L."/>
            <person name="Pitluck S."/>
            <person name="Sims D."/>
            <person name="Brettin T."/>
            <person name="Detter J.C."/>
            <person name="Han C."/>
            <person name="Larimer F."/>
            <person name="Land M."/>
            <person name="Hauser L."/>
            <person name="Kyrpides N."/>
            <person name="Ivanova N."/>
            <person name="Marx C.J."/>
            <person name="Richardson P."/>
        </authorList>
    </citation>
    <scope>NUCLEOTIDE SEQUENCE [LARGE SCALE GENOMIC DNA]</scope>
    <source>
        <strain>LMG 21967 / CNCM I-2342 / ORS 2060</strain>
    </source>
</reference>
<sequence length="248" mass="28255">MTSHPRDAPQFYLTAPSPCPYLPGQYERKVFTHLVGRRARDLNEILTQGGFRRSQTIAYRPACETCRACISVRVIVGDFVPSASQRRVMRRNRDLVGQPQPNRPASEQYALFRRYLDARHGDGGMVDMTVLDYAMMVEDSHVETHLVVYRKRGPDTAINGRGVGAPIAICLTDVLSDGLSMVYSFYEPSEADRSLGTYMILDHIERARLLGLPYLYLGYWVEGSRKMDYKAKFGPQERLMPQGWVRVE</sequence>
<accession>B8IPM0</accession>
<gene>
    <name evidence="1" type="primary">bpt</name>
    <name type="ordered locus">Mnod_7576</name>
</gene>
<name>BPT_METNO</name>
<protein>
    <recommendedName>
        <fullName evidence="1">Aspartate/glutamate leucyltransferase</fullName>
        <ecNumber evidence="1">2.3.2.29</ecNumber>
    </recommendedName>
</protein>
<evidence type="ECO:0000255" key="1">
    <source>
        <dbReference type="HAMAP-Rule" id="MF_00689"/>
    </source>
</evidence>
<dbReference type="EC" id="2.3.2.29" evidence="1"/>
<dbReference type="EMBL" id="CP001349">
    <property type="protein sequence ID" value="ACL62312.1"/>
    <property type="molecule type" value="Genomic_DNA"/>
</dbReference>
<dbReference type="RefSeq" id="WP_015933866.1">
    <property type="nucleotide sequence ID" value="NC_011894.1"/>
</dbReference>
<dbReference type="SMR" id="B8IPM0"/>
<dbReference type="STRING" id="460265.Mnod_7576"/>
<dbReference type="KEGG" id="mno:Mnod_7576"/>
<dbReference type="eggNOG" id="COG2935">
    <property type="taxonomic scope" value="Bacteria"/>
</dbReference>
<dbReference type="HOGENOM" id="CLU_077607_1_0_5"/>
<dbReference type="OrthoDB" id="9782022at2"/>
<dbReference type="Proteomes" id="UP000008207">
    <property type="component" value="Chromosome"/>
</dbReference>
<dbReference type="GO" id="GO:0005737">
    <property type="term" value="C:cytoplasm"/>
    <property type="evidence" value="ECO:0007669"/>
    <property type="project" value="UniProtKB-SubCell"/>
</dbReference>
<dbReference type="GO" id="GO:0004057">
    <property type="term" value="F:arginyl-tRNA--protein transferase activity"/>
    <property type="evidence" value="ECO:0007669"/>
    <property type="project" value="InterPro"/>
</dbReference>
<dbReference type="GO" id="GO:0008914">
    <property type="term" value="F:leucyl-tRNA--protein transferase activity"/>
    <property type="evidence" value="ECO:0007669"/>
    <property type="project" value="UniProtKB-UniRule"/>
</dbReference>
<dbReference type="GO" id="GO:0071596">
    <property type="term" value="P:ubiquitin-dependent protein catabolic process via the N-end rule pathway"/>
    <property type="evidence" value="ECO:0007669"/>
    <property type="project" value="InterPro"/>
</dbReference>
<dbReference type="HAMAP" id="MF_00689">
    <property type="entry name" value="Bpt"/>
    <property type="match status" value="1"/>
</dbReference>
<dbReference type="InterPro" id="IPR016181">
    <property type="entry name" value="Acyl_CoA_acyltransferase"/>
</dbReference>
<dbReference type="InterPro" id="IPR017138">
    <property type="entry name" value="Asp_Glu_LeuTrfase"/>
</dbReference>
<dbReference type="InterPro" id="IPR030700">
    <property type="entry name" value="N-end_Aminoacyl_Trfase"/>
</dbReference>
<dbReference type="InterPro" id="IPR007472">
    <property type="entry name" value="N-end_Aminoacyl_Trfase_C"/>
</dbReference>
<dbReference type="InterPro" id="IPR007471">
    <property type="entry name" value="N-end_Aminoacyl_Trfase_N"/>
</dbReference>
<dbReference type="NCBIfam" id="NF002342">
    <property type="entry name" value="PRK01305.1-3"/>
    <property type="match status" value="1"/>
</dbReference>
<dbReference type="NCBIfam" id="NF002343">
    <property type="entry name" value="PRK01305.1-4"/>
    <property type="match status" value="1"/>
</dbReference>
<dbReference type="NCBIfam" id="NF002346">
    <property type="entry name" value="PRK01305.2-3"/>
    <property type="match status" value="1"/>
</dbReference>
<dbReference type="PANTHER" id="PTHR21367">
    <property type="entry name" value="ARGININE-TRNA-PROTEIN TRANSFERASE 1"/>
    <property type="match status" value="1"/>
</dbReference>
<dbReference type="PANTHER" id="PTHR21367:SF1">
    <property type="entry name" value="ARGINYL-TRNA--PROTEIN TRANSFERASE 1"/>
    <property type="match status" value="1"/>
</dbReference>
<dbReference type="Pfam" id="PF04377">
    <property type="entry name" value="ATE_C"/>
    <property type="match status" value="1"/>
</dbReference>
<dbReference type="Pfam" id="PF04376">
    <property type="entry name" value="ATE_N"/>
    <property type="match status" value="1"/>
</dbReference>
<dbReference type="PIRSF" id="PIRSF037208">
    <property type="entry name" value="ATE_pro_prd"/>
    <property type="match status" value="1"/>
</dbReference>
<dbReference type="SUPFAM" id="SSF55729">
    <property type="entry name" value="Acyl-CoA N-acyltransferases (Nat)"/>
    <property type="match status" value="1"/>
</dbReference>
<feature type="chain" id="PRO_1000147806" description="Aspartate/glutamate leucyltransferase">
    <location>
        <begin position="1"/>
        <end position="248"/>
    </location>
</feature>
<proteinExistence type="inferred from homology"/>
<comment type="function">
    <text evidence="1">Functions in the N-end rule pathway of protein degradation where it conjugates Leu from its aminoacyl-tRNA to the N-termini of proteins containing an N-terminal aspartate or glutamate.</text>
</comment>
<comment type="catalytic activity">
    <reaction evidence="1">
        <text>N-terminal L-glutamyl-[protein] + L-leucyl-tRNA(Leu) = N-terminal L-leucyl-L-glutamyl-[protein] + tRNA(Leu) + H(+)</text>
        <dbReference type="Rhea" id="RHEA:50412"/>
        <dbReference type="Rhea" id="RHEA-COMP:9613"/>
        <dbReference type="Rhea" id="RHEA-COMP:9622"/>
        <dbReference type="Rhea" id="RHEA-COMP:12664"/>
        <dbReference type="Rhea" id="RHEA-COMP:12668"/>
        <dbReference type="ChEBI" id="CHEBI:15378"/>
        <dbReference type="ChEBI" id="CHEBI:64721"/>
        <dbReference type="ChEBI" id="CHEBI:78442"/>
        <dbReference type="ChEBI" id="CHEBI:78494"/>
        <dbReference type="ChEBI" id="CHEBI:133041"/>
        <dbReference type="EC" id="2.3.2.29"/>
    </reaction>
</comment>
<comment type="catalytic activity">
    <reaction evidence="1">
        <text>N-terminal L-aspartyl-[protein] + L-leucyl-tRNA(Leu) = N-terminal L-leucyl-L-aspartyl-[protein] + tRNA(Leu) + H(+)</text>
        <dbReference type="Rhea" id="RHEA:50420"/>
        <dbReference type="Rhea" id="RHEA-COMP:9613"/>
        <dbReference type="Rhea" id="RHEA-COMP:9622"/>
        <dbReference type="Rhea" id="RHEA-COMP:12669"/>
        <dbReference type="Rhea" id="RHEA-COMP:12674"/>
        <dbReference type="ChEBI" id="CHEBI:15378"/>
        <dbReference type="ChEBI" id="CHEBI:64720"/>
        <dbReference type="ChEBI" id="CHEBI:78442"/>
        <dbReference type="ChEBI" id="CHEBI:78494"/>
        <dbReference type="ChEBI" id="CHEBI:133042"/>
        <dbReference type="EC" id="2.3.2.29"/>
    </reaction>
</comment>
<comment type="subcellular location">
    <subcellularLocation>
        <location evidence="1">Cytoplasm</location>
    </subcellularLocation>
</comment>
<comment type="similarity">
    <text evidence="1">Belongs to the R-transferase family. Bpt subfamily.</text>
</comment>
<organism>
    <name type="scientific">Methylobacterium nodulans (strain LMG 21967 / CNCM I-2342 / ORS 2060)</name>
    <dbReference type="NCBI Taxonomy" id="460265"/>
    <lineage>
        <taxon>Bacteria</taxon>
        <taxon>Pseudomonadati</taxon>
        <taxon>Pseudomonadota</taxon>
        <taxon>Alphaproteobacteria</taxon>
        <taxon>Hyphomicrobiales</taxon>
        <taxon>Methylobacteriaceae</taxon>
        <taxon>Methylobacterium</taxon>
    </lineage>
</organism>
<keyword id="KW-0012">Acyltransferase</keyword>
<keyword id="KW-0963">Cytoplasm</keyword>
<keyword id="KW-1185">Reference proteome</keyword>
<keyword id="KW-0808">Transferase</keyword>